<accession>C0MCB1</accession>
<organism>
    <name type="scientific">Streptococcus equi subsp. zooepidemicus (strain H70)</name>
    <dbReference type="NCBI Taxonomy" id="553483"/>
    <lineage>
        <taxon>Bacteria</taxon>
        <taxon>Bacillati</taxon>
        <taxon>Bacillota</taxon>
        <taxon>Bacilli</taxon>
        <taxon>Lactobacillales</taxon>
        <taxon>Streptococcaceae</taxon>
        <taxon>Streptococcus</taxon>
    </lineage>
</organism>
<sequence>MANVKLFDQTGKEVSTVELNDAIFGIEPNESVVFDVVISQRASLRQGTHAVKNRSAVSGGGRKPWRQKGTGRARQGSIRSPQWRGGGVVFGPTPRSYGYKLPQKVRRLALKSVYSAKVAEDKFVAVESLSFAAPKTAEFAKVLSALSIDTKVLVLVEEGNEFAALSARNLPNVAVATAATASVLDIVNADKLLVTKEAISTIEEVLA</sequence>
<feature type="chain" id="PRO_1000214583" description="Large ribosomal subunit protein uL4">
    <location>
        <begin position="1"/>
        <end position="207"/>
    </location>
</feature>
<feature type="region of interest" description="Disordered" evidence="2">
    <location>
        <begin position="49"/>
        <end position="78"/>
    </location>
</feature>
<reference key="1">
    <citation type="journal article" date="2009" name="PLoS Pathog.">
        <title>Genomic evidence for the evolution of Streptococcus equi: host restriction, increased virulence, and genetic exchange with human pathogens.</title>
        <authorList>
            <person name="Holden M.T.G."/>
            <person name="Heather Z."/>
            <person name="Paillot R."/>
            <person name="Steward K.F."/>
            <person name="Webb K."/>
            <person name="Ainslie F."/>
            <person name="Jourdan T."/>
            <person name="Bason N.C."/>
            <person name="Holroyd N.E."/>
            <person name="Mungall K."/>
            <person name="Quail M.A."/>
            <person name="Sanders M."/>
            <person name="Simmonds M."/>
            <person name="Willey D."/>
            <person name="Brooks K."/>
            <person name="Aanensen D.M."/>
            <person name="Spratt B.G."/>
            <person name="Jolley K.A."/>
            <person name="Maiden M.C.J."/>
            <person name="Kehoe M."/>
            <person name="Chanter N."/>
            <person name="Bentley S.D."/>
            <person name="Robinson C."/>
            <person name="Maskell D.J."/>
            <person name="Parkhill J."/>
            <person name="Waller A.S."/>
        </authorList>
    </citation>
    <scope>NUCLEOTIDE SEQUENCE [LARGE SCALE GENOMIC DNA]</scope>
    <source>
        <strain>H70</strain>
    </source>
</reference>
<proteinExistence type="inferred from homology"/>
<evidence type="ECO:0000255" key="1">
    <source>
        <dbReference type="HAMAP-Rule" id="MF_01328"/>
    </source>
</evidence>
<evidence type="ECO:0000256" key="2">
    <source>
        <dbReference type="SAM" id="MobiDB-lite"/>
    </source>
</evidence>
<evidence type="ECO:0000305" key="3"/>
<gene>
    <name evidence="1" type="primary">rplD</name>
    <name type="ordered locus">SZO_00510</name>
</gene>
<dbReference type="EMBL" id="FM204884">
    <property type="protein sequence ID" value="CAW97646.1"/>
    <property type="molecule type" value="Genomic_DNA"/>
</dbReference>
<dbReference type="SMR" id="C0MCB1"/>
<dbReference type="KEGG" id="seq:SZO_00510"/>
<dbReference type="eggNOG" id="COG0088">
    <property type="taxonomic scope" value="Bacteria"/>
</dbReference>
<dbReference type="HOGENOM" id="CLU_041575_5_2_9"/>
<dbReference type="Proteomes" id="UP000001368">
    <property type="component" value="Chromosome"/>
</dbReference>
<dbReference type="GO" id="GO:1990904">
    <property type="term" value="C:ribonucleoprotein complex"/>
    <property type="evidence" value="ECO:0007669"/>
    <property type="project" value="UniProtKB-KW"/>
</dbReference>
<dbReference type="GO" id="GO:0005840">
    <property type="term" value="C:ribosome"/>
    <property type="evidence" value="ECO:0007669"/>
    <property type="project" value="UniProtKB-KW"/>
</dbReference>
<dbReference type="GO" id="GO:0019843">
    <property type="term" value="F:rRNA binding"/>
    <property type="evidence" value="ECO:0007669"/>
    <property type="project" value="UniProtKB-UniRule"/>
</dbReference>
<dbReference type="GO" id="GO:0003735">
    <property type="term" value="F:structural constituent of ribosome"/>
    <property type="evidence" value="ECO:0007669"/>
    <property type="project" value="InterPro"/>
</dbReference>
<dbReference type="GO" id="GO:0006412">
    <property type="term" value="P:translation"/>
    <property type="evidence" value="ECO:0007669"/>
    <property type="project" value="UniProtKB-UniRule"/>
</dbReference>
<dbReference type="FunFam" id="3.40.1370.10:FF:000003">
    <property type="entry name" value="50S ribosomal protein L4"/>
    <property type="match status" value="1"/>
</dbReference>
<dbReference type="Gene3D" id="3.40.1370.10">
    <property type="match status" value="1"/>
</dbReference>
<dbReference type="HAMAP" id="MF_01328_B">
    <property type="entry name" value="Ribosomal_uL4_B"/>
    <property type="match status" value="1"/>
</dbReference>
<dbReference type="InterPro" id="IPR002136">
    <property type="entry name" value="Ribosomal_uL4"/>
</dbReference>
<dbReference type="InterPro" id="IPR013005">
    <property type="entry name" value="Ribosomal_uL4-like"/>
</dbReference>
<dbReference type="InterPro" id="IPR023574">
    <property type="entry name" value="Ribosomal_uL4_dom_sf"/>
</dbReference>
<dbReference type="NCBIfam" id="TIGR03953">
    <property type="entry name" value="rplD_bact"/>
    <property type="match status" value="1"/>
</dbReference>
<dbReference type="PANTHER" id="PTHR10746">
    <property type="entry name" value="50S RIBOSOMAL PROTEIN L4"/>
    <property type="match status" value="1"/>
</dbReference>
<dbReference type="PANTHER" id="PTHR10746:SF6">
    <property type="entry name" value="LARGE RIBOSOMAL SUBUNIT PROTEIN UL4M"/>
    <property type="match status" value="1"/>
</dbReference>
<dbReference type="Pfam" id="PF00573">
    <property type="entry name" value="Ribosomal_L4"/>
    <property type="match status" value="1"/>
</dbReference>
<dbReference type="SUPFAM" id="SSF52166">
    <property type="entry name" value="Ribosomal protein L4"/>
    <property type="match status" value="1"/>
</dbReference>
<protein>
    <recommendedName>
        <fullName evidence="1">Large ribosomal subunit protein uL4</fullName>
    </recommendedName>
    <alternativeName>
        <fullName evidence="3">50S ribosomal protein L4</fullName>
    </alternativeName>
</protein>
<name>RL4_STRS7</name>
<keyword id="KW-0687">Ribonucleoprotein</keyword>
<keyword id="KW-0689">Ribosomal protein</keyword>
<keyword id="KW-0694">RNA-binding</keyword>
<keyword id="KW-0699">rRNA-binding</keyword>
<comment type="function">
    <text evidence="1">One of the primary rRNA binding proteins, this protein initially binds near the 5'-end of the 23S rRNA. It is important during the early stages of 50S assembly. It makes multiple contacts with different domains of the 23S rRNA in the assembled 50S subunit and ribosome.</text>
</comment>
<comment type="function">
    <text evidence="1">Forms part of the polypeptide exit tunnel.</text>
</comment>
<comment type="subunit">
    <text evidence="1">Part of the 50S ribosomal subunit.</text>
</comment>
<comment type="similarity">
    <text evidence="1">Belongs to the universal ribosomal protein uL4 family.</text>
</comment>